<evidence type="ECO:0000255" key="1">
    <source>
        <dbReference type="HAMAP-Rule" id="MF_00160"/>
    </source>
</evidence>
<comment type="function">
    <text evidence="1">Catalyzes the reversible conversion of 3-phosphohydroxypyruvate to phosphoserine and of 3-hydroxy-2-oxo-4-phosphonooxybutanoate to phosphohydroxythreonine.</text>
</comment>
<comment type="catalytic activity">
    <reaction evidence="1">
        <text>O-phospho-L-serine + 2-oxoglutarate = 3-phosphooxypyruvate + L-glutamate</text>
        <dbReference type="Rhea" id="RHEA:14329"/>
        <dbReference type="ChEBI" id="CHEBI:16810"/>
        <dbReference type="ChEBI" id="CHEBI:18110"/>
        <dbReference type="ChEBI" id="CHEBI:29985"/>
        <dbReference type="ChEBI" id="CHEBI:57524"/>
        <dbReference type="EC" id="2.6.1.52"/>
    </reaction>
</comment>
<comment type="catalytic activity">
    <reaction evidence="1">
        <text>4-(phosphooxy)-L-threonine + 2-oxoglutarate = (R)-3-hydroxy-2-oxo-4-phosphooxybutanoate + L-glutamate</text>
        <dbReference type="Rhea" id="RHEA:16573"/>
        <dbReference type="ChEBI" id="CHEBI:16810"/>
        <dbReference type="ChEBI" id="CHEBI:29985"/>
        <dbReference type="ChEBI" id="CHEBI:58452"/>
        <dbReference type="ChEBI" id="CHEBI:58538"/>
        <dbReference type="EC" id="2.6.1.52"/>
    </reaction>
</comment>
<comment type="cofactor">
    <cofactor evidence="1">
        <name>pyridoxal 5'-phosphate</name>
        <dbReference type="ChEBI" id="CHEBI:597326"/>
    </cofactor>
    <text evidence="1">Binds 1 pyridoxal phosphate per subunit.</text>
</comment>
<comment type="pathway">
    <text evidence="1">Amino-acid biosynthesis; L-serine biosynthesis; L-serine from 3-phospho-D-glycerate: step 2/3.</text>
</comment>
<comment type="pathway">
    <text evidence="1">Cofactor biosynthesis; pyridoxine 5'-phosphate biosynthesis; pyridoxine 5'-phosphate from D-erythrose 4-phosphate: step 3/5.</text>
</comment>
<comment type="subunit">
    <text evidence="1">Homodimer.</text>
</comment>
<comment type="subcellular location">
    <subcellularLocation>
        <location evidence="1">Cytoplasm</location>
    </subcellularLocation>
</comment>
<comment type="similarity">
    <text evidence="1">Belongs to the class-V pyridoxal-phosphate-dependent aminotransferase family. SerC subfamily.</text>
</comment>
<reference key="1">
    <citation type="submission" date="2007-08" db="EMBL/GenBank/DDBJ databases">
        <title>Complete sequence of Shewanella sediminis HAW-EB3.</title>
        <authorList>
            <consortium name="US DOE Joint Genome Institute"/>
            <person name="Copeland A."/>
            <person name="Lucas S."/>
            <person name="Lapidus A."/>
            <person name="Barry K."/>
            <person name="Glavina del Rio T."/>
            <person name="Dalin E."/>
            <person name="Tice H."/>
            <person name="Pitluck S."/>
            <person name="Chertkov O."/>
            <person name="Brettin T."/>
            <person name="Bruce D."/>
            <person name="Detter J.C."/>
            <person name="Han C."/>
            <person name="Schmutz J."/>
            <person name="Larimer F."/>
            <person name="Land M."/>
            <person name="Hauser L."/>
            <person name="Kyrpides N."/>
            <person name="Kim E."/>
            <person name="Zhao J.-S."/>
            <person name="Richardson P."/>
        </authorList>
    </citation>
    <scope>NUCLEOTIDE SEQUENCE [LARGE SCALE GENOMIC DNA]</scope>
    <source>
        <strain>HAW-EB3</strain>
    </source>
</reference>
<feature type="chain" id="PRO_1000203573" description="Phosphoserine aminotransferase">
    <location>
        <begin position="1"/>
        <end position="364"/>
    </location>
</feature>
<feature type="binding site" evidence="1">
    <location>
        <position position="42"/>
    </location>
    <ligand>
        <name>L-glutamate</name>
        <dbReference type="ChEBI" id="CHEBI:29985"/>
    </ligand>
</feature>
<feature type="binding site" evidence="1">
    <location>
        <begin position="76"/>
        <end position="77"/>
    </location>
    <ligand>
        <name>pyridoxal 5'-phosphate</name>
        <dbReference type="ChEBI" id="CHEBI:597326"/>
    </ligand>
</feature>
<feature type="binding site" evidence="1">
    <location>
        <position position="102"/>
    </location>
    <ligand>
        <name>pyridoxal 5'-phosphate</name>
        <dbReference type="ChEBI" id="CHEBI:597326"/>
    </ligand>
</feature>
<feature type="binding site" evidence="1">
    <location>
        <position position="156"/>
    </location>
    <ligand>
        <name>pyridoxal 5'-phosphate</name>
        <dbReference type="ChEBI" id="CHEBI:597326"/>
    </ligand>
</feature>
<feature type="binding site" evidence="1">
    <location>
        <position position="175"/>
    </location>
    <ligand>
        <name>pyridoxal 5'-phosphate</name>
        <dbReference type="ChEBI" id="CHEBI:597326"/>
    </ligand>
</feature>
<feature type="binding site" evidence="1">
    <location>
        <position position="198"/>
    </location>
    <ligand>
        <name>pyridoxal 5'-phosphate</name>
        <dbReference type="ChEBI" id="CHEBI:597326"/>
    </ligand>
</feature>
<feature type="binding site" evidence="1">
    <location>
        <begin position="240"/>
        <end position="241"/>
    </location>
    <ligand>
        <name>pyridoxal 5'-phosphate</name>
        <dbReference type="ChEBI" id="CHEBI:597326"/>
    </ligand>
</feature>
<feature type="modified residue" description="N6-(pyridoxal phosphate)lysine" evidence="1">
    <location>
        <position position="199"/>
    </location>
</feature>
<gene>
    <name evidence="1" type="primary">serC</name>
    <name type="ordered locus">Ssed_2302</name>
</gene>
<organism>
    <name type="scientific">Shewanella sediminis (strain HAW-EB3)</name>
    <dbReference type="NCBI Taxonomy" id="425104"/>
    <lineage>
        <taxon>Bacteria</taxon>
        <taxon>Pseudomonadati</taxon>
        <taxon>Pseudomonadota</taxon>
        <taxon>Gammaproteobacteria</taxon>
        <taxon>Alteromonadales</taxon>
        <taxon>Shewanellaceae</taxon>
        <taxon>Shewanella</taxon>
    </lineage>
</organism>
<protein>
    <recommendedName>
        <fullName evidence="1">Phosphoserine aminotransferase</fullName>
        <ecNumber evidence="1">2.6.1.52</ecNumber>
    </recommendedName>
    <alternativeName>
        <fullName evidence="1">Phosphohydroxythreonine aminotransferase</fullName>
        <shortName evidence="1">PSAT</shortName>
    </alternativeName>
</protein>
<proteinExistence type="inferred from homology"/>
<sequence length="364" mass="39881">MSTTYNFCAGPAMLPQAVMKKAQSELLDWNGLGTSVMEISHRSKEFIALTDKAETDLRELMSIPENYHVLFMHGGGRGQFSAVVNNFLGENGKALYLVSGSWSKSAVDEARKLTSDAQIDTLDLVVNDNGIGAVSIPELTGEAADYRYLHYCPNETVDGIEIFEDINSPWPIVADMSSNIMSREIDVSKFGLIYAGAQKNIGPSGLSIVIVRDDMLELPSLPQSSIMDYRLAVKHGSMYNTPPTFAWYLAAEVFKWLKSSGGVATMAEVNAKKAQLLYDFIDGSNFYNNTVSAQNRSLMNVIFYLANEDNNADFLAEASRAGLVALKGHRSVGGMRASIYNAMPIEGVEKLVEFMKGFAEKNNG</sequence>
<dbReference type="EC" id="2.6.1.52" evidence="1"/>
<dbReference type="EMBL" id="CP000821">
    <property type="protein sequence ID" value="ABV36911.1"/>
    <property type="molecule type" value="Genomic_DNA"/>
</dbReference>
<dbReference type="RefSeq" id="WP_012142646.1">
    <property type="nucleotide sequence ID" value="NC_009831.1"/>
</dbReference>
<dbReference type="SMR" id="A8FVN8"/>
<dbReference type="STRING" id="425104.Ssed_2302"/>
<dbReference type="KEGG" id="sse:Ssed_2302"/>
<dbReference type="eggNOG" id="COG1932">
    <property type="taxonomic scope" value="Bacteria"/>
</dbReference>
<dbReference type="HOGENOM" id="CLU_034866_0_2_6"/>
<dbReference type="OrthoDB" id="9809412at2"/>
<dbReference type="UniPathway" id="UPA00135">
    <property type="reaction ID" value="UER00197"/>
</dbReference>
<dbReference type="UniPathway" id="UPA00244">
    <property type="reaction ID" value="UER00311"/>
</dbReference>
<dbReference type="Proteomes" id="UP000002015">
    <property type="component" value="Chromosome"/>
</dbReference>
<dbReference type="GO" id="GO:0005737">
    <property type="term" value="C:cytoplasm"/>
    <property type="evidence" value="ECO:0007669"/>
    <property type="project" value="UniProtKB-SubCell"/>
</dbReference>
<dbReference type="GO" id="GO:0004648">
    <property type="term" value="F:O-phospho-L-serine:2-oxoglutarate aminotransferase activity"/>
    <property type="evidence" value="ECO:0007669"/>
    <property type="project" value="UniProtKB-UniRule"/>
</dbReference>
<dbReference type="GO" id="GO:0030170">
    <property type="term" value="F:pyridoxal phosphate binding"/>
    <property type="evidence" value="ECO:0007669"/>
    <property type="project" value="UniProtKB-UniRule"/>
</dbReference>
<dbReference type="GO" id="GO:0006564">
    <property type="term" value="P:L-serine biosynthetic process"/>
    <property type="evidence" value="ECO:0007669"/>
    <property type="project" value="UniProtKB-UniRule"/>
</dbReference>
<dbReference type="GO" id="GO:0008615">
    <property type="term" value="P:pyridoxine biosynthetic process"/>
    <property type="evidence" value="ECO:0007669"/>
    <property type="project" value="UniProtKB-UniRule"/>
</dbReference>
<dbReference type="FunFam" id="3.40.640.10:FF:000010">
    <property type="entry name" value="Phosphoserine aminotransferase"/>
    <property type="match status" value="1"/>
</dbReference>
<dbReference type="FunFam" id="3.90.1150.10:FF:000006">
    <property type="entry name" value="Phosphoserine aminotransferase"/>
    <property type="match status" value="1"/>
</dbReference>
<dbReference type="Gene3D" id="3.90.1150.10">
    <property type="entry name" value="Aspartate Aminotransferase, domain 1"/>
    <property type="match status" value="1"/>
</dbReference>
<dbReference type="Gene3D" id="3.40.640.10">
    <property type="entry name" value="Type I PLP-dependent aspartate aminotransferase-like (Major domain)"/>
    <property type="match status" value="1"/>
</dbReference>
<dbReference type="HAMAP" id="MF_00160">
    <property type="entry name" value="SerC_aminotrans_5"/>
    <property type="match status" value="1"/>
</dbReference>
<dbReference type="InterPro" id="IPR000192">
    <property type="entry name" value="Aminotrans_V_dom"/>
</dbReference>
<dbReference type="InterPro" id="IPR020578">
    <property type="entry name" value="Aminotrans_V_PyrdxlP_BS"/>
</dbReference>
<dbReference type="InterPro" id="IPR022278">
    <property type="entry name" value="Pser_aminoTfrase"/>
</dbReference>
<dbReference type="InterPro" id="IPR015424">
    <property type="entry name" value="PyrdxlP-dep_Trfase"/>
</dbReference>
<dbReference type="InterPro" id="IPR015421">
    <property type="entry name" value="PyrdxlP-dep_Trfase_major"/>
</dbReference>
<dbReference type="InterPro" id="IPR015422">
    <property type="entry name" value="PyrdxlP-dep_Trfase_small"/>
</dbReference>
<dbReference type="NCBIfam" id="NF003764">
    <property type="entry name" value="PRK05355.1"/>
    <property type="match status" value="1"/>
</dbReference>
<dbReference type="NCBIfam" id="TIGR01364">
    <property type="entry name" value="serC_1"/>
    <property type="match status" value="1"/>
</dbReference>
<dbReference type="PANTHER" id="PTHR43247">
    <property type="entry name" value="PHOSPHOSERINE AMINOTRANSFERASE"/>
    <property type="match status" value="1"/>
</dbReference>
<dbReference type="PANTHER" id="PTHR43247:SF1">
    <property type="entry name" value="PHOSPHOSERINE AMINOTRANSFERASE"/>
    <property type="match status" value="1"/>
</dbReference>
<dbReference type="Pfam" id="PF00266">
    <property type="entry name" value="Aminotran_5"/>
    <property type="match status" value="1"/>
</dbReference>
<dbReference type="PIRSF" id="PIRSF000525">
    <property type="entry name" value="SerC"/>
    <property type="match status" value="1"/>
</dbReference>
<dbReference type="SUPFAM" id="SSF53383">
    <property type="entry name" value="PLP-dependent transferases"/>
    <property type="match status" value="1"/>
</dbReference>
<dbReference type="PROSITE" id="PS00595">
    <property type="entry name" value="AA_TRANSFER_CLASS_5"/>
    <property type="match status" value="1"/>
</dbReference>
<keyword id="KW-0028">Amino-acid biosynthesis</keyword>
<keyword id="KW-0032">Aminotransferase</keyword>
<keyword id="KW-0963">Cytoplasm</keyword>
<keyword id="KW-0663">Pyridoxal phosphate</keyword>
<keyword id="KW-0664">Pyridoxine biosynthesis</keyword>
<keyword id="KW-1185">Reference proteome</keyword>
<keyword id="KW-0718">Serine biosynthesis</keyword>
<keyword id="KW-0808">Transferase</keyword>
<accession>A8FVN8</accession>
<name>SERC_SHESH</name>